<organism>
    <name type="scientific">Caenorhabditis elegans</name>
    <dbReference type="NCBI Taxonomy" id="6239"/>
    <lineage>
        <taxon>Eukaryota</taxon>
        <taxon>Metazoa</taxon>
        <taxon>Ecdysozoa</taxon>
        <taxon>Nematoda</taxon>
        <taxon>Chromadorea</taxon>
        <taxon>Rhabditida</taxon>
        <taxon>Rhabditina</taxon>
        <taxon>Rhabditomorpha</taxon>
        <taxon>Rhabditoidea</taxon>
        <taxon>Rhabditidae</taxon>
        <taxon>Peloderinae</taxon>
        <taxon>Caenorhabditis</taxon>
    </lineage>
</organism>
<comment type="function">
    <text evidence="3">Subunit of the 26S proteasome which plays a role in ubiquitin-dependent proteolysis. Has an essential role in oogenesis and larval growth. Required for intestinal function and default lifespan.</text>
</comment>
<comment type="subunit">
    <text evidence="1">Part of the 26S proteasome.</text>
</comment>
<comment type="interaction">
    <interactant intactId="EBI-312245">
        <id>Q95Y72</id>
    </interactant>
    <interactant intactId="EBI-312239">
        <id>Q04908</id>
        <label>rpn-3</label>
    </interactant>
    <organismsDiffer>false</organismsDiffer>
    <experiments>2</experiments>
</comment>
<comment type="subcellular location">
    <subcellularLocation>
        <location evidence="3">Nucleus</location>
    </subcellularLocation>
    <subcellularLocation>
        <location evidence="3">Cytoplasm</location>
    </subcellularLocation>
    <text>Diffuse in cytoplasm.</text>
</comment>
<comment type="tissue specificity">
    <text evidence="3">Expressed in intestinal epithelium and head neurons.</text>
</comment>
<comment type="developmental stage">
    <text evidence="3">Expressed in larval and adult stages.</text>
</comment>
<comment type="disruption phenotype">
    <text evidence="3">Embryonic lethality, growth defects, larval arrest, reduced lifespan, and sterility.</text>
</comment>
<comment type="similarity">
    <text evidence="4">Belongs to the DSS1/SEM1 family.</text>
</comment>
<reference key="1">
    <citation type="journal article" date="1998" name="Science">
        <title>Genome sequence of the nematode C. elegans: a platform for investigating biology.</title>
        <authorList>
            <consortium name="The C. elegans sequencing consortium"/>
        </authorList>
    </citation>
    <scope>NUCLEOTIDE SEQUENCE [LARGE SCALE GENOMIC DNA]</scope>
    <source>
        <strain>Bristol N2</strain>
    </source>
</reference>
<reference key="2">
    <citation type="journal article" date="2008" name="BMC Dev. Biol.">
        <title>C. elegans dss-1 is functionally conserved and required for oogenesis and larval growth.</title>
        <authorList>
            <person name="Pispa J."/>
            <person name="Palmen S."/>
            <person name="Holmberg C.I."/>
            <person name="Jantti J."/>
        </authorList>
    </citation>
    <scope>FUNCTION</scope>
    <scope>SUBCELLULAR LOCATION</scope>
    <scope>TISSUE SPECIFICITY</scope>
    <scope>DEVELOPMENTAL STAGE</scope>
    <scope>DISRUPTION PHENOTYPE</scope>
</reference>
<accession>Q95Y72</accession>
<name>DSS1_CAEEL</name>
<sequence>MSSTAAKKDVKSSAVPVTAVVEKKEFEEEEFEEFPVQEWAERAEGEEDDVNVWEDNWDDETHESEFSKQLKEELRKSGHQVA</sequence>
<feature type="chain" id="PRO_0000122963" description="Probable 26S proteasome complex subunit dss-1">
    <location>
        <begin position="1"/>
        <end position="82"/>
    </location>
</feature>
<feature type="region of interest" description="Disordered" evidence="2">
    <location>
        <begin position="56"/>
        <end position="82"/>
    </location>
</feature>
<feature type="compositionally biased region" description="Basic and acidic residues" evidence="2">
    <location>
        <begin position="63"/>
        <end position="76"/>
    </location>
</feature>
<gene>
    <name type="primary">dss-1</name>
    <name type="ORF">Y119D3B.15</name>
</gene>
<protein>
    <recommendedName>
        <fullName>Probable 26S proteasome complex subunit dss-1</fullName>
    </recommendedName>
    <alternativeName>
        <fullName>Deleted in split hand/split foot protein 1 homolog</fullName>
    </alternativeName>
</protein>
<evidence type="ECO:0000250" key="1"/>
<evidence type="ECO:0000256" key="2">
    <source>
        <dbReference type="SAM" id="MobiDB-lite"/>
    </source>
</evidence>
<evidence type="ECO:0000269" key="3">
    <source>
    </source>
</evidence>
<evidence type="ECO:0000305" key="4"/>
<dbReference type="EMBL" id="FO081827">
    <property type="protein sequence ID" value="CCD73924.1"/>
    <property type="molecule type" value="Genomic_DNA"/>
</dbReference>
<dbReference type="RefSeq" id="NP_001370842.1">
    <property type="nucleotide sequence ID" value="NM_001384022.2"/>
</dbReference>
<dbReference type="RefSeq" id="NP_497346.2">
    <property type="nucleotide sequence ID" value="NM_064945.4"/>
</dbReference>
<dbReference type="BioGRID" id="40544">
    <property type="interactions" value="3"/>
</dbReference>
<dbReference type="DIP" id="DIP-24478N"/>
<dbReference type="FunCoup" id="Q95Y72">
    <property type="interactions" value="678"/>
</dbReference>
<dbReference type="IntAct" id="Q95Y72">
    <property type="interactions" value="1"/>
</dbReference>
<dbReference type="STRING" id="6239.Y119D3B.15.1"/>
<dbReference type="PaxDb" id="6239-Y119D3B.15"/>
<dbReference type="PeptideAtlas" id="Q95Y72"/>
<dbReference type="EnsemblMetazoa" id="Y119D3B.15.1">
    <property type="protein sequence ID" value="Y119D3B.15.1"/>
    <property type="gene ID" value="WBGene00022492"/>
</dbReference>
<dbReference type="EnsemblMetazoa" id="Y119D3B.15.2">
    <property type="protein sequence ID" value="Y119D3B.15.2"/>
    <property type="gene ID" value="WBGene00022492"/>
</dbReference>
<dbReference type="GeneID" id="175284"/>
<dbReference type="AGR" id="WB:WBGene00022492"/>
<dbReference type="WormBase" id="Y119D3B.15">
    <property type="protein sequence ID" value="CE34396"/>
    <property type="gene ID" value="WBGene00022492"/>
    <property type="gene designation" value="dss-1"/>
</dbReference>
<dbReference type="eggNOG" id="KOG4764">
    <property type="taxonomic scope" value="Eukaryota"/>
</dbReference>
<dbReference type="HOGENOM" id="CLU_141774_1_2_1"/>
<dbReference type="InParanoid" id="Q95Y72"/>
<dbReference type="OMA" id="EFEVADW"/>
<dbReference type="PRO" id="PR:Q95Y72"/>
<dbReference type="Proteomes" id="UP000001940">
    <property type="component" value="Chromosome III"/>
</dbReference>
<dbReference type="Bgee" id="WBGene00022492">
    <property type="expression patterns" value="Expressed in adult organism and 3 other cell types or tissues"/>
</dbReference>
<dbReference type="GO" id="GO:0005737">
    <property type="term" value="C:cytoplasm"/>
    <property type="evidence" value="ECO:0000314"/>
    <property type="project" value="WormBase"/>
</dbReference>
<dbReference type="GO" id="GO:0005634">
    <property type="term" value="C:nucleus"/>
    <property type="evidence" value="ECO:0000314"/>
    <property type="project" value="WormBase"/>
</dbReference>
<dbReference type="GO" id="GO:0000502">
    <property type="term" value="C:proteasome complex"/>
    <property type="evidence" value="ECO:0000250"/>
    <property type="project" value="UniProtKB"/>
</dbReference>
<dbReference type="GO" id="GO:0008541">
    <property type="term" value="C:proteasome regulatory particle, lid subcomplex"/>
    <property type="evidence" value="ECO:0000250"/>
    <property type="project" value="WormBase"/>
</dbReference>
<dbReference type="GO" id="GO:0000724">
    <property type="term" value="P:double-strand break repair via homologous recombination"/>
    <property type="evidence" value="ECO:0000318"/>
    <property type="project" value="GO_Central"/>
</dbReference>
<dbReference type="GO" id="GO:0009792">
    <property type="term" value="P:embryo development ending in birth or egg hatching"/>
    <property type="evidence" value="ECO:0000315"/>
    <property type="project" value="WormBase"/>
</dbReference>
<dbReference type="GO" id="GO:0060429">
    <property type="term" value="P:epithelium development"/>
    <property type="evidence" value="ECO:0000315"/>
    <property type="project" value="WormBase"/>
</dbReference>
<dbReference type="GO" id="GO:0050892">
    <property type="term" value="P:intestinal absorption"/>
    <property type="evidence" value="ECO:0000315"/>
    <property type="project" value="WormBase"/>
</dbReference>
<dbReference type="GO" id="GO:0006406">
    <property type="term" value="P:mRNA export from nucleus"/>
    <property type="evidence" value="ECO:0007669"/>
    <property type="project" value="InterPro"/>
</dbReference>
<dbReference type="GO" id="GO:0002119">
    <property type="term" value="P:nematode larval development"/>
    <property type="evidence" value="ECO:0000315"/>
    <property type="project" value="WormBase"/>
</dbReference>
<dbReference type="GO" id="GO:0048477">
    <property type="term" value="P:oogenesis"/>
    <property type="evidence" value="ECO:0000315"/>
    <property type="project" value="WormBase"/>
</dbReference>
<dbReference type="GO" id="GO:0045927">
    <property type="term" value="P:positive regulation of growth"/>
    <property type="evidence" value="ECO:0000316"/>
    <property type="project" value="WormBase"/>
</dbReference>
<dbReference type="GO" id="GO:0040018">
    <property type="term" value="P:positive regulation of multicellular organism growth"/>
    <property type="evidence" value="ECO:0000315"/>
    <property type="project" value="WormBase"/>
</dbReference>
<dbReference type="GO" id="GO:0031398">
    <property type="term" value="P:positive regulation of protein ubiquitination"/>
    <property type="evidence" value="ECO:0000316"/>
    <property type="project" value="WormBase"/>
</dbReference>
<dbReference type="GO" id="GO:0043248">
    <property type="term" value="P:proteasome assembly"/>
    <property type="evidence" value="ECO:0007669"/>
    <property type="project" value="InterPro"/>
</dbReference>
<dbReference type="GO" id="GO:0040025">
    <property type="term" value="P:vulval development"/>
    <property type="evidence" value="ECO:0000315"/>
    <property type="project" value="WormBase"/>
</dbReference>
<dbReference type="CDD" id="cd13768">
    <property type="entry name" value="DSS1_Sem1"/>
    <property type="match status" value="1"/>
</dbReference>
<dbReference type="InterPro" id="IPR007834">
    <property type="entry name" value="DSS1_SEM1"/>
</dbReference>
<dbReference type="PANTHER" id="PTHR16771">
    <property type="entry name" value="26 PROTEASOME COMPLEX SUBUNIT DSS1"/>
    <property type="match status" value="1"/>
</dbReference>
<dbReference type="PANTHER" id="PTHR16771:SF0">
    <property type="entry name" value="26S PROTEASOME COMPLEX SUBUNIT SEM1"/>
    <property type="match status" value="1"/>
</dbReference>
<dbReference type="Pfam" id="PF05160">
    <property type="entry name" value="DSS1_SEM1"/>
    <property type="match status" value="1"/>
</dbReference>
<dbReference type="SMART" id="SM01385">
    <property type="entry name" value="DSS1_SEM1"/>
    <property type="match status" value="1"/>
</dbReference>
<proteinExistence type="evidence at protein level"/>
<keyword id="KW-0963">Cytoplasm</keyword>
<keyword id="KW-0217">Developmental protein</keyword>
<keyword id="KW-0539">Nucleus</keyword>
<keyword id="KW-0647">Proteasome</keyword>
<keyword id="KW-1185">Reference proteome</keyword>